<protein>
    <recommendedName>
        <fullName evidence="1">Anamorsin homolog 2</fullName>
    </recommendedName>
    <alternativeName>
        <fullName evidence="1">Fe-S cluster assembly protein DRE2 homolog 2</fullName>
    </alternativeName>
</protein>
<gene>
    <name type="ordered locus">Os04g0682050</name>
    <name type="ordered locus">LOC_Os04g58564</name>
    <name type="ORF">OsJ_16663</name>
    <name type="ORF">OSJNBa0032F06.14</name>
</gene>
<keyword id="KW-0001">2Fe-2S</keyword>
<keyword id="KW-0004">4Fe-4S</keyword>
<keyword id="KW-0963">Cytoplasm</keyword>
<keyword id="KW-0408">Iron</keyword>
<keyword id="KW-0411">Iron-sulfur</keyword>
<keyword id="KW-0479">Metal-binding</keyword>
<keyword id="KW-0496">Mitochondrion</keyword>
<keyword id="KW-1185">Reference proteome</keyword>
<comment type="function">
    <text evidence="1">Component of the cytosolic iron-sulfur (Fe-S) protein assembly (CIA) machinery. Required for the maturation of extramitochondrial Fe-S proteins. Part of an electron transfer chain functioning in an early step of cytosolic Fe-S biogenesis, facilitating the de novo assembly of a [4Fe-4S] cluster on the cytosolic Fe-S scaffold complex. Electrons are transferred from NADPH via a FAD- and FMN-containing diflavin oxidoreductase. Together with the diflavin oxidoreductase, also required for the assembly of the diferric tyrosyl radical cofactor of ribonucleotide reductase (RNR), probably by providing electrons for reduction during radical cofactor maturation in the catalytic small subunit.</text>
</comment>
<comment type="cofactor">
    <cofactor evidence="1">
        <name>[2Fe-2S] cluster</name>
        <dbReference type="ChEBI" id="CHEBI:190135"/>
    </cofactor>
</comment>
<comment type="cofactor">
    <cofactor evidence="1">
        <name>[4Fe-4S] cluster</name>
        <dbReference type="ChEBI" id="CHEBI:49883"/>
    </cofactor>
</comment>
<comment type="subunit">
    <text evidence="1">Monomer.</text>
</comment>
<comment type="subcellular location">
    <subcellularLocation>
        <location evidence="1">Cytoplasm</location>
    </subcellularLocation>
    <subcellularLocation>
        <location evidence="1">Mitochondrion intermembrane space</location>
    </subcellularLocation>
</comment>
<comment type="domain">
    <text evidence="1">The C-terminal domain binds 2 Fe-S clusters but is otherwise mostly in an intrinsically disordered conformation.</text>
</comment>
<comment type="domain">
    <text evidence="1">The N-terminal domain has structural similarity with S-adenosyl-L-methionine-dependent methyltransferases, but does not bind S-adenosyl-L-methionine. It is required for correct assembly of the 2 Fe-S clusters.</text>
</comment>
<comment type="domain">
    <text evidence="1">The twin Cx2C motifs are involved in the recognition by the mitochondrial MIA40-ERV1 disulfide relay system. The formation of 2 disulfide bonds in the Cx2C motifs through dithiol/disulfide exchange reactions effectively traps the protein in the mitochondrial intermembrane space.</text>
</comment>
<comment type="similarity">
    <text evidence="1">Belongs to the anamorsin family.</text>
</comment>
<comment type="sequence caution" evidence="2">
    <conflict type="erroneous gene model prediction">
        <sequence resource="EMBL-CDS" id="BAH92876"/>
    </conflict>
</comment>
<accession>Q7XPW7</accession>
<accession>A0A0P0WGK5</accession>
<accession>B9FDC6</accession>
<accession>C7J1Z1</accession>
<reference key="1">
    <citation type="journal article" date="2002" name="Nature">
        <title>Sequence and analysis of rice chromosome 4.</title>
        <authorList>
            <person name="Feng Q."/>
            <person name="Zhang Y."/>
            <person name="Hao P."/>
            <person name="Wang S."/>
            <person name="Fu G."/>
            <person name="Huang Y."/>
            <person name="Li Y."/>
            <person name="Zhu J."/>
            <person name="Liu Y."/>
            <person name="Hu X."/>
            <person name="Jia P."/>
            <person name="Zhang Y."/>
            <person name="Zhao Q."/>
            <person name="Ying K."/>
            <person name="Yu S."/>
            <person name="Tang Y."/>
            <person name="Weng Q."/>
            <person name="Zhang L."/>
            <person name="Lu Y."/>
            <person name="Mu J."/>
            <person name="Lu Y."/>
            <person name="Zhang L.S."/>
            <person name="Yu Z."/>
            <person name="Fan D."/>
            <person name="Liu X."/>
            <person name="Lu T."/>
            <person name="Li C."/>
            <person name="Wu Y."/>
            <person name="Sun T."/>
            <person name="Lei H."/>
            <person name="Li T."/>
            <person name="Hu H."/>
            <person name="Guan J."/>
            <person name="Wu M."/>
            <person name="Zhang R."/>
            <person name="Zhou B."/>
            <person name="Chen Z."/>
            <person name="Chen L."/>
            <person name="Jin Z."/>
            <person name="Wang R."/>
            <person name="Yin H."/>
            <person name="Cai Z."/>
            <person name="Ren S."/>
            <person name="Lv G."/>
            <person name="Gu W."/>
            <person name="Zhu G."/>
            <person name="Tu Y."/>
            <person name="Jia J."/>
            <person name="Zhang Y."/>
            <person name="Chen J."/>
            <person name="Kang H."/>
            <person name="Chen X."/>
            <person name="Shao C."/>
            <person name="Sun Y."/>
            <person name="Hu Q."/>
            <person name="Zhang X."/>
            <person name="Zhang W."/>
            <person name="Wang L."/>
            <person name="Ding C."/>
            <person name="Sheng H."/>
            <person name="Gu J."/>
            <person name="Chen S."/>
            <person name="Ni L."/>
            <person name="Zhu F."/>
            <person name="Chen W."/>
            <person name="Lan L."/>
            <person name="Lai Y."/>
            <person name="Cheng Z."/>
            <person name="Gu M."/>
            <person name="Jiang J."/>
            <person name="Li J."/>
            <person name="Hong G."/>
            <person name="Xue Y."/>
            <person name="Han B."/>
        </authorList>
    </citation>
    <scope>NUCLEOTIDE SEQUENCE [LARGE SCALE GENOMIC DNA]</scope>
    <source>
        <strain>cv. Nipponbare</strain>
    </source>
</reference>
<reference key="2">
    <citation type="journal article" date="2005" name="Nature">
        <title>The map-based sequence of the rice genome.</title>
        <authorList>
            <consortium name="International rice genome sequencing project (IRGSP)"/>
        </authorList>
    </citation>
    <scope>NUCLEOTIDE SEQUENCE [LARGE SCALE GENOMIC DNA]</scope>
    <source>
        <strain>cv. Nipponbare</strain>
    </source>
</reference>
<reference key="3">
    <citation type="journal article" date="2008" name="Nucleic Acids Res.">
        <title>The rice annotation project database (RAP-DB): 2008 update.</title>
        <authorList>
            <consortium name="The rice annotation project (RAP)"/>
        </authorList>
    </citation>
    <scope>GENOME REANNOTATION</scope>
    <source>
        <strain>cv. Nipponbare</strain>
    </source>
</reference>
<reference key="4">
    <citation type="journal article" date="2013" name="Rice">
        <title>Improvement of the Oryza sativa Nipponbare reference genome using next generation sequence and optical map data.</title>
        <authorList>
            <person name="Kawahara Y."/>
            <person name="de la Bastide M."/>
            <person name="Hamilton J.P."/>
            <person name="Kanamori H."/>
            <person name="McCombie W.R."/>
            <person name="Ouyang S."/>
            <person name="Schwartz D.C."/>
            <person name="Tanaka T."/>
            <person name="Wu J."/>
            <person name="Zhou S."/>
            <person name="Childs K.L."/>
            <person name="Davidson R.M."/>
            <person name="Lin H."/>
            <person name="Quesada-Ocampo L."/>
            <person name="Vaillancourt B."/>
            <person name="Sakai H."/>
            <person name="Lee S.S."/>
            <person name="Kim J."/>
            <person name="Numa H."/>
            <person name="Itoh T."/>
            <person name="Buell C.R."/>
            <person name="Matsumoto T."/>
        </authorList>
    </citation>
    <scope>GENOME REANNOTATION</scope>
    <source>
        <strain>cv. Nipponbare</strain>
    </source>
</reference>
<reference key="5">
    <citation type="journal article" date="2005" name="PLoS Biol.">
        <title>The genomes of Oryza sativa: a history of duplications.</title>
        <authorList>
            <person name="Yu J."/>
            <person name="Wang J."/>
            <person name="Lin W."/>
            <person name="Li S."/>
            <person name="Li H."/>
            <person name="Zhou J."/>
            <person name="Ni P."/>
            <person name="Dong W."/>
            <person name="Hu S."/>
            <person name="Zeng C."/>
            <person name="Zhang J."/>
            <person name="Zhang Y."/>
            <person name="Li R."/>
            <person name="Xu Z."/>
            <person name="Li S."/>
            <person name="Li X."/>
            <person name="Zheng H."/>
            <person name="Cong L."/>
            <person name="Lin L."/>
            <person name="Yin J."/>
            <person name="Geng J."/>
            <person name="Li G."/>
            <person name="Shi J."/>
            <person name="Liu J."/>
            <person name="Lv H."/>
            <person name="Li J."/>
            <person name="Wang J."/>
            <person name="Deng Y."/>
            <person name="Ran L."/>
            <person name="Shi X."/>
            <person name="Wang X."/>
            <person name="Wu Q."/>
            <person name="Li C."/>
            <person name="Ren X."/>
            <person name="Wang J."/>
            <person name="Wang X."/>
            <person name="Li D."/>
            <person name="Liu D."/>
            <person name="Zhang X."/>
            <person name="Ji Z."/>
            <person name="Zhao W."/>
            <person name="Sun Y."/>
            <person name="Zhang Z."/>
            <person name="Bao J."/>
            <person name="Han Y."/>
            <person name="Dong L."/>
            <person name="Ji J."/>
            <person name="Chen P."/>
            <person name="Wu S."/>
            <person name="Liu J."/>
            <person name="Xiao Y."/>
            <person name="Bu D."/>
            <person name="Tan J."/>
            <person name="Yang L."/>
            <person name="Ye C."/>
            <person name="Zhang J."/>
            <person name="Xu J."/>
            <person name="Zhou Y."/>
            <person name="Yu Y."/>
            <person name="Zhang B."/>
            <person name="Zhuang S."/>
            <person name="Wei H."/>
            <person name="Liu B."/>
            <person name="Lei M."/>
            <person name="Yu H."/>
            <person name="Li Y."/>
            <person name="Xu H."/>
            <person name="Wei S."/>
            <person name="He X."/>
            <person name="Fang L."/>
            <person name="Zhang Z."/>
            <person name="Zhang Y."/>
            <person name="Huang X."/>
            <person name="Su Z."/>
            <person name="Tong W."/>
            <person name="Li J."/>
            <person name="Tong Z."/>
            <person name="Li S."/>
            <person name="Ye J."/>
            <person name="Wang L."/>
            <person name="Fang L."/>
            <person name="Lei T."/>
            <person name="Chen C.-S."/>
            <person name="Chen H.-C."/>
            <person name="Xu Z."/>
            <person name="Li H."/>
            <person name="Huang H."/>
            <person name="Zhang F."/>
            <person name="Xu H."/>
            <person name="Li N."/>
            <person name="Zhao C."/>
            <person name="Li S."/>
            <person name="Dong L."/>
            <person name="Huang Y."/>
            <person name="Li L."/>
            <person name="Xi Y."/>
            <person name="Qi Q."/>
            <person name="Li W."/>
            <person name="Zhang B."/>
            <person name="Hu W."/>
            <person name="Zhang Y."/>
            <person name="Tian X."/>
            <person name="Jiao Y."/>
            <person name="Liang X."/>
            <person name="Jin J."/>
            <person name="Gao L."/>
            <person name="Zheng W."/>
            <person name="Hao B."/>
            <person name="Liu S.-M."/>
            <person name="Wang W."/>
            <person name="Yuan L."/>
            <person name="Cao M."/>
            <person name="McDermott J."/>
            <person name="Samudrala R."/>
            <person name="Wang J."/>
            <person name="Wong G.K.-S."/>
            <person name="Yang H."/>
        </authorList>
    </citation>
    <scope>NUCLEOTIDE SEQUENCE [LARGE SCALE GENOMIC DNA]</scope>
    <source>
        <strain>cv. Nipponbare</strain>
    </source>
</reference>
<reference key="6">
    <citation type="submission" date="2006-10" db="EMBL/GenBank/DDBJ databases">
        <title>Oryza sativa full length cDNA.</title>
        <authorList>
            <consortium name="The rice full-length cDNA consortium"/>
        </authorList>
    </citation>
    <scope>NUCLEOTIDE SEQUENCE [LARGE SCALE MRNA]</scope>
    <source>
        <strain>cv. Nipponbare</strain>
    </source>
</reference>
<organism>
    <name type="scientific">Oryza sativa subsp. japonica</name>
    <name type="common">Rice</name>
    <dbReference type="NCBI Taxonomy" id="39947"/>
    <lineage>
        <taxon>Eukaryota</taxon>
        <taxon>Viridiplantae</taxon>
        <taxon>Streptophyta</taxon>
        <taxon>Embryophyta</taxon>
        <taxon>Tracheophyta</taxon>
        <taxon>Spermatophyta</taxon>
        <taxon>Magnoliopsida</taxon>
        <taxon>Liliopsida</taxon>
        <taxon>Poales</taxon>
        <taxon>Poaceae</taxon>
        <taxon>BOP clade</taxon>
        <taxon>Oryzoideae</taxon>
        <taxon>Oryzeae</taxon>
        <taxon>Oryzinae</taxon>
        <taxon>Oryza</taxon>
        <taxon>Oryza sativa</taxon>
    </lineage>
</organism>
<dbReference type="EMBL" id="AL606641">
    <property type="protein sequence ID" value="CAE03431.1"/>
    <property type="molecule type" value="Genomic_DNA"/>
</dbReference>
<dbReference type="EMBL" id="AP008210">
    <property type="protein sequence ID" value="BAH92876.1"/>
    <property type="status" value="ALT_SEQ"/>
    <property type="molecule type" value="Genomic_DNA"/>
</dbReference>
<dbReference type="EMBL" id="AP014960">
    <property type="protein sequence ID" value="BAS91685.1"/>
    <property type="molecule type" value="Genomic_DNA"/>
</dbReference>
<dbReference type="EMBL" id="CM000141">
    <property type="protein sequence ID" value="EEE61923.1"/>
    <property type="molecule type" value="Genomic_DNA"/>
</dbReference>
<dbReference type="EMBL" id="AK243564">
    <property type="status" value="NOT_ANNOTATED_CDS"/>
    <property type="molecule type" value="mRNA"/>
</dbReference>
<dbReference type="RefSeq" id="XP_015633498.1">
    <property type="nucleotide sequence ID" value="XM_015778012.1"/>
</dbReference>
<dbReference type="RefSeq" id="XP_015633499.1">
    <property type="nucleotide sequence ID" value="XM_015778013.1"/>
</dbReference>
<dbReference type="SMR" id="Q7XPW7"/>
<dbReference type="FunCoup" id="Q7XPW7">
    <property type="interactions" value="3094"/>
</dbReference>
<dbReference type="STRING" id="39947.Q7XPW7"/>
<dbReference type="PaxDb" id="39947-Q7XPW7"/>
<dbReference type="EnsemblPlants" id="Os04t0682050-01">
    <property type="protein sequence ID" value="Os04t0682050-01"/>
    <property type="gene ID" value="Os04g0682050"/>
</dbReference>
<dbReference type="GeneID" id="9266719"/>
<dbReference type="Gramene" id="Os04t0682050-01">
    <property type="protein sequence ID" value="Os04t0682050-01"/>
    <property type="gene ID" value="Os04g0682050"/>
</dbReference>
<dbReference type="KEGG" id="dosa:Os04g0682050"/>
<dbReference type="eggNOG" id="KOG4020">
    <property type="taxonomic scope" value="Eukaryota"/>
</dbReference>
<dbReference type="HOGENOM" id="CLU_064393_0_0_1"/>
<dbReference type="InParanoid" id="Q7XPW7"/>
<dbReference type="OMA" id="PNVGDCE"/>
<dbReference type="OrthoDB" id="311633at2759"/>
<dbReference type="Proteomes" id="UP000000763">
    <property type="component" value="Chromosome 4"/>
</dbReference>
<dbReference type="Proteomes" id="UP000007752">
    <property type="component" value="Chromosome 4"/>
</dbReference>
<dbReference type="Proteomes" id="UP000059680">
    <property type="component" value="Chromosome 4"/>
</dbReference>
<dbReference type="GO" id="GO:0005737">
    <property type="term" value="C:cytoplasm"/>
    <property type="evidence" value="ECO:0000318"/>
    <property type="project" value="GO_Central"/>
</dbReference>
<dbReference type="GO" id="GO:0005758">
    <property type="term" value="C:mitochondrial intermembrane space"/>
    <property type="evidence" value="ECO:0007669"/>
    <property type="project" value="UniProtKB-SubCell"/>
</dbReference>
<dbReference type="GO" id="GO:0051537">
    <property type="term" value="F:2 iron, 2 sulfur cluster binding"/>
    <property type="evidence" value="ECO:0007669"/>
    <property type="project" value="UniProtKB-UniRule"/>
</dbReference>
<dbReference type="GO" id="GO:0051539">
    <property type="term" value="F:4 iron, 4 sulfur cluster binding"/>
    <property type="evidence" value="ECO:0007669"/>
    <property type="project" value="UniProtKB-KW"/>
</dbReference>
<dbReference type="GO" id="GO:0009055">
    <property type="term" value="F:electron transfer activity"/>
    <property type="evidence" value="ECO:0007669"/>
    <property type="project" value="UniProtKB-UniRule"/>
</dbReference>
<dbReference type="GO" id="GO:0046872">
    <property type="term" value="F:metal ion binding"/>
    <property type="evidence" value="ECO:0007669"/>
    <property type="project" value="UniProtKB-KW"/>
</dbReference>
<dbReference type="GO" id="GO:0016226">
    <property type="term" value="P:iron-sulfur cluster assembly"/>
    <property type="evidence" value="ECO:0000318"/>
    <property type="project" value="GO_Central"/>
</dbReference>
<dbReference type="FunFam" id="3.40.50.150:FF:000178">
    <property type="entry name" value="Anamorsin homolog"/>
    <property type="match status" value="1"/>
</dbReference>
<dbReference type="Gene3D" id="3.40.50.150">
    <property type="entry name" value="Vaccinia Virus protein VP39"/>
    <property type="match status" value="1"/>
</dbReference>
<dbReference type="HAMAP" id="MF_03115">
    <property type="entry name" value="Anamorsin"/>
    <property type="match status" value="1"/>
</dbReference>
<dbReference type="InterPro" id="IPR007785">
    <property type="entry name" value="Anamorsin"/>
</dbReference>
<dbReference type="InterPro" id="IPR046408">
    <property type="entry name" value="CIAPIN1"/>
</dbReference>
<dbReference type="InterPro" id="IPR029063">
    <property type="entry name" value="SAM-dependent_MTases_sf"/>
</dbReference>
<dbReference type="PANTHER" id="PTHR13273">
    <property type="entry name" value="ANAMORSIN"/>
    <property type="match status" value="1"/>
</dbReference>
<dbReference type="PANTHER" id="PTHR13273:SF14">
    <property type="entry name" value="ANAMORSIN"/>
    <property type="match status" value="1"/>
</dbReference>
<dbReference type="Pfam" id="PF05093">
    <property type="entry name" value="CIAPIN1"/>
    <property type="match status" value="1"/>
</dbReference>
<feature type="chain" id="PRO_0000392339" description="Anamorsin homolog 2">
    <location>
        <begin position="1"/>
        <end position="264"/>
    </location>
</feature>
<feature type="region of interest" description="N-terminal SAM-like domain" evidence="1">
    <location>
        <begin position="1"/>
        <end position="142"/>
    </location>
</feature>
<feature type="region of interest" description="Linker" evidence="1">
    <location>
        <begin position="143"/>
        <end position="174"/>
    </location>
</feature>
<feature type="region of interest" description="Fe-S binding site A" evidence="1">
    <location>
        <begin position="185"/>
        <end position="199"/>
    </location>
</feature>
<feature type="region of interest" description="Fe-S binding site B" evidence="1">
    <location>
        <begin position="225"/>
        <end position="239"/>
    </location>
</feature>
<feature type="short sequence motif" description="Cx2C motif 1" evidence="1">
    <location>
        <begin position="225"/>
        <end position="228"/>
    </location>
</feature>
<feature type="short sequence motif" description="Cx2C motif 2" evidence="1">
    <location>
        <begin position="236"/>
        <end position="239"/>
    </location>
</feature>
<feature type="binding site" evidence="1">
    <location>
        <position position="185"/>
    </location>
    <ligand>
        <name>[2Fe-2S] cluster</name>
        <dbReference type="ChEBI" id="CHEBI:190135"/>
    </ligand>
</feature>
<feature type="binding site" evidence="1">
    <location>
        <position position="194"/>
    </location>
    <ligand>
        <name>[2Fe-2S] cluster</name>
        <dbReference type="ChEBI" id="CHEBI:190135"/>
    </ligand>
</feature>
<feature type="binding site" evidence="1">
    <location>
        <position position="197"/>
    </location>
    <ligand>
        <name>[2Fe-2S] cluster</name>
        <dbReference type="ChEBI" id="CHEBI:190135"/>
    </ligand>
</feature>
<feature type="binding site" evidence="1">
    <location>
        <position position="199"/>
    </location>
    <ligand>
        <name>[2Fe-2S] cluster</name>
        <dbReference type="ChEBI" id="CHEBI:190135"/>
    </ligand>
</feature>
<feature type="binding site" evidence="1">
    <location>
        <position position="225"/>
    </location>
    <ligand>
        <name>[4Fe-4S] cluster</name>
        <dbReference type="ChEBI" id="CHEBI:49883"/>
    </ligand>
</feature>
<feature type="binding site" evidence="1">
    <location>
        <position position="228"/>
    </location>
    <ligand>
        <name>[4Fe-4S] cluster</name>
        <dbReference type="ChEBI" id="CHEBI:49883"/>
    </ligand>
</feature>
<feature type="binding site" evidence="1">
    <location>
        <position position="236"/>
    </location>
    <ligand>
        <name>[4Fe-4S] cluster</name>
        <dbReference type="ChEBI" id="CHEBI:49883"/>
    </ligand>
</feature>
<feature type="binding site" evidence="1">
    <location>
        <position position="239"/>
    </location>
    <ligand>
        <name>[4Fe-4S] cluster</name>
        <dbReference type="ChEBI" id="CHEBI:49883"/>
    </ligand>
</feature>
<feature type="sequence conflict" description="In Ref. 5; EEE61923 and 6; AK243564." evidence="2" ref="5 6">
    <original>F</original>
    <variation>V</variation>
    <location>
        <position position="30"/>
    </location>
</feature>
<evidence type="ECO:0000255" key="1">
    <source>
        <dbReference type="HAMAP-Rule" id="MF_03115"/>
    </source>
</evidence>
<evidence type="ECO:0000305" key="2"/>
<proteinExistence type="evidence at transcript level"/>
<name>DRE22_ORYSJ</name>
<sequence>MAATAAALAVTDELALPLRAVGDLAAAAGFSREEVVVITQCASLGGKLPFDDASVGSVLAVIKKVENLGDLFITEISRVLKAGGMVLIQSSPSDQDPNNSIQRKLLLGGFVDVQASAASSQDSEHSVTIKAKKVSWSMGSSFPLKKATKGLPKIQIDDDSELIDEDSLLTEDDLKKPELPVVGDCEVGATRKACKNCTCGRAEAEEKVEKLNLTSEQINNPQSACGNCGLGDAFRCGTCPYRGLPAFKPGEKIALPGNFLAADL</sequence>